<name>TM7S3_HUMAN</name>
<gene>
    <name type="primary">TM7SF3</name>
</gene>
<sequence>MGFLQLLVVAVLASEHRVAGAAEVFGNSSEGLIEFSVGKFRYFELNRPFPEEAILHDISSNVTFLIFQIHSQYQNTTVSFSPTLLSNSSETGTASGLVFILRPEQSTCTWYLGTSGIQPVQNMAILLSYSERDPVPGGCNLEFDLDIDPNIYLEYNFFETTIKFAPANLGYARGVDPPPCDAGTDQDSRWRLQYDVYQYFLPENDLTEEMLLKHLQRMVSVPQVKASALKVVTLTANDKTSVSFSSLPGQGVIYNVIVWDPFLNTSAAYIPAHTYACSFEAGEGSCASLGRVSSKVFFTLFALLGFFICFFGHRFWKTELFFIGFIIMGFFFYILITRLTPIKYDVNLILTAVTGSVGGMFLVAVWWRFGILSICMLCVGLVLGFLISSVTFFTPLGNLKIFHDDGVFWVTFSCIAILIPVVFMGCLRILNILTCGVIGSYSVVLAIDSYWSTSLSYITLNVLKRALNKDFHRAFTNVPFQTNDFIILAVWGMLAVSGITLQIRRERGRPFFPPHPYKLWKQERERRVTNILDPSYHIPPLRERLYGRLTQIKGLFQKEQPAGERTPLLL</sequence>
<keyword id="KW-1003">Cell membrane</keyword>
<keyword id="KW-0325">Glycoprotein</keyword>
<keyword id="KW-0472">Membrane</keyword>
<keyword id="KW-1267">Proteomics identification</keyword>
<keyword id="KW-1185">Reference proteome</keyword>
<keyword id="KW-0732">Signal</keyword>
<keyword id="KW-0346">Stress response</keyword>
<keyword id="KW-0812">Transmembrane</keyword>
<keyword id="KW-1133">Transmembrane helix</keyword>
<reference key="1">
    <citation type="journal article" date="2000" name="Cytogenet. Cell Genet.">
        <title>Isolation and characterization of a novel gene encoding a putative seven-span transmembrane protein, TM7SF3.</title>
        <authorList>
            <person name="Akashi H."/>
            <person name="Han H.-J."/>
            <person name="Iizaka M."/>
            <person name="Nakajima Y."/>
            <person name="Furukawa Y."/>
            <person name="Sugano S."/>
            <person name="Imai K."/>
            <person name="Nakamura Y."/>
        </authorList>
    </citation>
    <scope>NUCLEOTIDE SEQUENCE [MRNA]</scope>
    <scope>SUBCELLULAR LOCATION</scope>
    <scope>TISSUE SPECIFICITY</scope>
</reference>
<reference key="2">
    <citation type="journal article" date="2004" name="Nat. Genet.">
        <title>Complete sequencing and characterization of 21,243 full-length human cDNAs.</title>
        <authorList>
            <person name="Ota T."/>
            <person name="Suzuki Y."/>
            <person name="Nishikawa T."/>
            <person name="Otsuki T."/>
            <person name="Sugiyama T."/>
            <person name="Irie R."/>
            <person name="Wakamatsu A."/>
            <person name="Hayashi K."/>
            <person name="Sato H."/>
            <person name="Nagai K."/>
            <person name="Kimura K."/>
            <person name="Makita H."/>
            <person name="Sekine M."/>
            <person name="Obayashi M."/>
            <person name="Nishi T."/>
            <person name="Shibahara T."/>
            <person name="Tanaka T."/>
            <person name="Ishii S."/>
            <person name="Yamamoto J."/>
            <person name="Saito K."/>
            <person name="Kawai Y."/>
            <person name="Isono Y."/>
            <person name="Nakamura Y."/>
            <person name="Nagahari K."/>
            <person name="Murakami K."/>
            <person name="Yasuda T."/>
            <person name="Iwayanagi T."/>
            <person name="Wagatsuma M."/>
            <person name="Shiratori A."/>
            <person name="Sudo H."/>
            <person name="Hosoiri T."/>
            <person name="Kaku Y."/>
            <person name="Kodaira H."/>
            <person name="Kondo H."/>
            <person name="Sugawara M."/>
            <person name="Takahashi M."/>
            <person name="Kanda K."/>
            <person name="Yokoi T."/>
            <person name="Furuya T."/>
            <person name="Kikkawa E."/>
            <person name="Omura Y."/>
            <person name="Abe K."/>
            <person name="Kamihara K."/>
            <person name="Katsuta N."/>
            <person name="Sato K."/>
            <person name="Tanikawa M."/>
            <person name="Yamazaki M."/>
            <person name="Ninomiya K."/>
            <person name="Ishibashi T."/>
            <person name="Yamashita H."/>
            <person name="Murakawa K."/>
            <person name="Fujimori K."/>
            <person name="Tanai H."/>
            <person name="Kimata M."/>
            <person name="Watanabe M."/>
            <person name="Hiraoka S."/>
            <person name="Chiba Y."/>
            <person name="Ishida S."/>
            <person name="Ono Y."/>
            <person name="Takiguchi S."/>
            <person name="Watanabe S."/>
            <person name="Yosida M."/>
            <person name="Hotuta T."/>
            <person name="Kusano J."/>
            <person name="Kanehori K."/>
            <person name="Takahashi-Fujii A."/>
            <person name="Hara H."/>
            <person name="Tanase T.-O."/>
            <person name="Nomura Y."/>
            <person name="Togiya S."/>
            <person name="Komai F."/>
            <person name="Hara R."/>
            <person name="Takeuchi K."/>
            <person name="Arita M."/>
            <person name="Imose N."/>
            <person name="Musashino K."/>
            <person name="Yuuki H."/>
            <person name="Oshima A."/>
            <person name="Sasaki N."/>
            <person name="Aotsuka S."/>
            <person name="Yoshikawa Y."/>
            <person name="Matsunawa H."/>
            <person name="Ichihara T."/>
            <person name="Shiohata N."/>
            <person name="Sano S."/>
            <person name="Moriya S."/>
            <person name="Momiyama H."/>
            <person name="Satoh N."/>
            <person name="Takami S."/>
            <person name="Terashima Y."/>
            <person name="Suzuki O."/>
            <person name="Nakagawa S."/>
            <person name="Senoh A."/>
            <person name="Mizoguchi H."/>
            <person name="Goto Y."/>
            <person name="Shimizu F."/>
            <person name="Wakebe H."/>
            <person name="Hishigaki H."/>
            <person name="Watanabe T."/>
            <person name="Sugiyama A."/>
            <person name="Takemoto M."/>
            <person name="Kawakami B."/>
            <person name="Yamazaki M."/>
            <person name="Watanabe K."/>
            <person name="Kumagai A."/>
            <person name="Itakura S."/>
            <person name="Fukuzumi Y."/>
            <person name="Fujimori Y."/>
            <person name="Komiyama M."/>
            <person name="Tashiro H."/>
            <person name="Tanigami A."/>
            <person name="Fujiwara T."/>
            <person name="Ono T."/>
            <person name="Yamada K."/>
            <person name="Fujii Y."/>
            <person name="Ozaki K."/>
            <person name="Hirao M."/>
            <person name="Ohmori Y."/>
            <person name="Kawabata A."/>
            <person name="Hikiji T."/>
            <person name="Kobatake N."/>
            <person name="Inagaki H."/>
            <person name="Ikema Y."/>
            <person name="Okamoto S."/>
            <person name="Okitani R."/>
            <person name="Kawakami T."/>
            <person name="Noguchi S."/>
            <person name="Itoh T."/>
            <person name="Shigeta K."/>
            <person name="Senba T."/>
            <person name="Matsumura K."/>
            <person name="Nakajima Y."/>
            <person name="Mizuno T."/>
            <person name="Morinaga M."/>
            <person name="Sasaki M."/>
            <person name="Togashi T."/>
            <person name="Oyama M."/>
            <person name="Hata H."/>
            <person name="Watanabe M."/>
            <person name="Komatsu T."/>
            <person name="Mizushima-Sugano J."/>
            <person name="Satoh T."/>
            <person name="Shirai Y."/>
            <person name="Takahashi Y."/>
            <person name="Nakagawa K."/>
            <person name="Okumura K."/>
            <person name="Nagase T."/>
            <person name="Nomura N."/>
            <person name="Kikuchi H."/>
            <person name="Masuho Y."/>
            <person name="Yamashita R."/>
            <person name="Nakai K."/>
            <person name="Yada T."/>
            <person name="Nakamura Y."/>
            <person name="Ohara O."/>
            <person name="Isogai T."/>
            <person name="Sugano S."/>
        </authorList>
    </citation>
    <scope>NUCLEOTIDE SEQUENCE [LARGE SCALE MRNA]</scope>
    <source>
        <tissue>Placenta</tissue>
    </source>
</reference>
<reference key="3">
    <citation type="submission" date="2005-07" db="EMBL/GenBank/DDBJ databases">
        <authorList>
            <person name="Mural R.J."/>
            <person name="Istrail S."/>
            <person name="Sutton G.G."/>
            <person name="Florea L."/>
            <person name="Halpern A.L."/>
            <person name="Mobarry C.M."/>
            <person name="Lippert R."/>
            <person name="Walenz B."/>
            <person name="Shatkay H."/>
            <person name="Dew I."/>
            <person name="Miller J.R."/>
            <person name="Flanigan M.J."/>
            <person name="Edwards N.J."/>
            <person name="Bolanos R."/>
            <person name="Fasulo D."/>
            <person name="Halldorsson B.V."/>
            <person name="Hannenhalli S."/>
            <person name="Turner R."/>
            <person name="Yooseph S."/>
            <person name="Lu F."/>
            <person name="Nusskern D.R."/>
            <person name="Shue B.C."/>
            <person name="Zheng X.H."/>
            <person name="Zhong F."/>
            <person name="Delcher A.L."/>
            <person name="Huson D.H."/>
            <person name="Kravitz S.A."/>
            <person name="Mouchard L."/>
            <person name="Reinert K."/>
            <person name="Remington K.A."/>
            <person name="Clark A.G."/>
            <person name="Waterman M.S."/>
            <person name="Eichler E.E."/>
            <person name="Adams M.D."/>
            <person name="Hunkapiller M.W."/>
            <person name="Myers E.W."/>
            <person name="Venter J.C."/>
        </authorList>
    </citation>
    <scope>NUCLEOTIDE SEQUENCE [LARGE SCALE GENOMIC DNA]</scope>
</reference>
<reference key="4">
    <citation type="journal article" date="2004" name="Genome Res.">
        <title>The status, quality, and expansion of the NIH full-length cDNA project: the Mammalian Gene Collection (MGC).</title>
        <authorList>
            <consortium name="The MGC Project Team"/>
        </authorList>
    </citation>
    <scope>NUCLEOTIDE SEQUENCE [LARGE SCALE MRNA]</scope>
    <source>
        <tissue>Placenta</tissue>
    </source>
</reference>
<reference key="5">
    <citation type="journal article" date="2011" name="Diabetologia">
        <title>An siRNA screen identifies transmembrane 7 superfamily member 3 (TM7SF3), a seven transmembrane orphan receptor, as an inhibitor of cytokine-induced death of pancreatic beta cells.</title>
        <authorList>
            <person name="Beck A."/>
            <person name="Isaac R."/>
            <person name="Lavelin I."/>
            <person name="Hart Y."/>
            <person name="Volberg T."/>
            <person name="Shatz-Azoulay H."/>
            <person name="Geiger B."/>
            <person name="Zick Y."/>
        </authorList>
    </citation>
    <scope>FUNCTION</scope>
</reference>
<reference key="6">
    <citation type="journal article" date="2017" name="Cell Death Differ.">
        <title>TM7SF3, a novel p53-regulated homeostatic factor, attenuates cellular stress and the subsequent induction of the unfolded protein response.</title>
        <authorList>
            <person name="Isaac R."/>
            <person name="Goldstein I."/>
            <person name="Furth N."/>
            <person name="Zilber N."/>
            <person name="Streim S."/>
            <person name="Boura-Halfon S."/>
            <person name="Elhanany E."/>
            <person name="Rotter V."/>
            <person name="Oren M."/>
            <person name="Zick Y."/>
        </authorList>
    </citation>
    <scope>FUNCTION</scope>
</reference>
<evidence type="ECO:0000255" key="1"/>
<evidence type="ECO:0000269" key="2">
    <source>
    </source>
</evidence>
<evidence type="ECO:0000269" key="3">
    <source>
    </source>
</evidence>
<evidence type="ECO:0000269" key="4">
    <source>
    </source>
</evidence>
<evidence type="ECO:0000305" key="5"/>
<proteinExistence type="evidence at protein level"/>
<protein>
    <recommendedName>
        <fullName>Transmembrane 7 superfamily member 3</fullName>
    </recommendedName>
    <alternativeName>
        <fullName>Seven span transmembrane protein</fullName>
    </alternativeName>
</protein>
<organism>
    <name type="scientific">Homo sapiens</name>
    <name type="common">Human</name>
    <dbReference type="NCBI Taxonomy" id="9606"/>
    <lineage>
        <taxon>Eukaryota</taxon>
        <taxon>Metazoa</taxon>
        <taxon>Chordata</taxon>
        <taxon>Craniata</taxon>
        <taxon>Vertebrata</taxon>
        <taxon>Euteleostomi</taxon>
        <taxon>Mammalia</taxon>
        <taxon>Eutheria</taxon>
        <taxon>Euarchontoglires</taxon>
        <taxon>Primates</taxon>
        <taxon>Haplorrhini</taxon>
        <taxon>Catarrhini</taxon>
        <taxon>Hominidae</taxon>
        <taxon>Homo</taxon>
    </lineage>
</organism>
<feature type="signal peptide" evidence="1">
    <location>
        <begin position="1"/>
        <end position="21"/>
    </location>
</feature>
<feature type="chain" id="PRO_0000022537" description="Transmembrane 7 superfamily member 3">
    <location>
        <begin position="22"/>
        <end position="570"/>
    </location>
</feature>
<feature type="transmembrane region" description="Helical" evidence="1">
    <location>
        <begin position="296"/>
        <end position="313"/>
    </location>
</feature>
<feature type="transmembrane region" description="Helical" evidence="1">
    <location>
        <begin position="320"/>
        <end position="342"/>
    </location>
</feature>
<feature type="transmembrane region" description="Helical" evidence="1">
    <location>
        <begin position="347"/>
        <end position="369"/>
    </location>
</feature>
<feature type="transmembrane region" description="Helical" evidence="1">
    <location>
        <begin position="371"/>
        <end position="393"/>
    </location>
</feature>
<feature type="transmembrane region" description="Helical" evidence="1">
    <location>
        <begin position="408"/>
        <end position="430"/>
    </location>
</feature>
<feature type="transmembrane region" description="Helical" evidence="1">
    <location>
        <begin position="437"/>
        <end position="459"/>
    </location>
</feature>
<feature type="transmembrane region" description="Helical" evidence="1">
    <location>
        <begin position="479"/>
        <end position="501"/>
    </location>
</feature>
<feature type="glycosylation site" description="N-linked (GlcNAc...) asparagine" evidence="1">
    <location>
        <position position="27"/>
    </location>
</feature>
<feature type="glycosylation site" description="N-linked (GlcNAc...) asparagine" evidence="1">
    <location>
        <position position="61"/>
    </location>
</feature>
<feature type="glycosylation site" description="N-linked (GlcNAc...) asparagine" evidence="1">
    <location>
        <position position="75"/>
    </location>
</feature>
<feature type="glycosylation site" description="N-linked (GlcNAc...) asparagine" evidence="1">
    <location>
        <position position="87"/>
    </location>
</feature>
<feature type="glycosylation site" description="N-linked (GlcNAc...) asparagine" evidence="1">
    <location>
        <position position="264"/>
    </location>
</feature>
<feature type="sequence variant" id="VAR_034556" description="In dbSNP:rs34735713.">
    <original>P</original>
    <variation>R</variation>
    <location>
        <position position="179"/>
    </location>
</feature>
<feature type="sequence variant" id="VAR_051437" description="In dbSNP:rs10771314.">
    <original>P</original>
    <variation>L</variation>
    <location>
        <position position="248"/>
    </location>
</feature>
<feature type="sequence conflict" description="In Ref. 2; BAA92046." evidence="5" ref="2">
    <original>E</original>
    <variation>A</variation>
    <location>
        <position position="564"/>
    </location>
</feature>
<accession>Q9NS93</accession>
<accession>B3KMZ3</accession>
<accession>Q9NUS4</accession>
<comment type="function">
    <text evidence="3 4">Involved in the inhibition of cytokine-induced death of pancreatic beta cells. Involved in the promotion of insulin secretion from pancreatic beta cells (PubMed:21853325). Is a downstream transcriptional target of p53/TP53, and acts as a pro-survival homeostatic factor that attenuates the development of cellular stress. Maintains protein homeostasis and promotes cell survival through attenuation of endoplasmic reticulum (ER) stress and the subsequent induction of unfolded protein response (UPR) (PubMed:27740623).</text>
</comment>
<comment type="subcellular location">
    <subcellularLocation>
        <location evidence="2">Cell membrane</location>
        <topology evidence="1">Multi-pass membrane protein</topology>
    </subcellularLocation>
</comment>
<comment type="tissue specificity">
    <text evidence="2">Widely expressed. Highly expressed in kidney and pancreas.</text>
</comment>
<dbReference type="EMBL" id="AB032470">
    <property type="protein sequence ID" value="BAA92856.1"/>
    <property type="molecule type" value="mRNA"/>
</dbReference>
<dbReference type="EMBL" id="AK002031">
    <property type="protein sequence ID" value="BAA92046.1"/>
    <property type="molecule type" value="mRNA"/>
</dbReference>
<dbReference type="EMBL" id="AK023085">
    <property type="protein sequence ID" value="BAG51155.1"/>
    <property type="molecule type" value="mRNA"/>
</dbReference>
<dbReference type="EMBL" id="CH471094">
    <property type="protein sequence ID" value="EAW96542.1"/>
    <property type="molecule type" value="Genomic_DNA"/>
</dbReference>
<dbReference type="EMBL" id="BC005176">
    <property type="protein sequence ID" value="AAH05176.1"/>
    <property type="molecule type" value="mRNA"/>
</dbReference>
<dbReference type="CCDS" id="CCDS8710.1"/>
<dbReference type="RefSeq" id="NP_057635.1">
    <property type="nucleotide sequence ID" value="NM_016551.3"/>
</dbReference>
<dbReference type="SMR" id="Q9NS93"/>
<dbReference type="BioGRID" id="119723">
    <property type="interactions" value="7"/>
</dbReference>
<dbReference type="FunCoup" id="Q9NS93">
    <property type="interactions" value="255"/>
</dbReference>
<dbReference type="IntAct" id="Q9NS93">
    <property type="interactions" value="3"/>
</dbReference>
<dbReference type="STRING" id="9606.ENSP00000342322"/>
<dbReference type="GlyCosmos" id="Q9NS93">
    <property type="glycosylation" value="5 sites, No reported glycans"/>
</dbReference>
<dbReference type="GlyGen" id="Q9NS93">
    <property type="glycosylation" value="6 sites, 1 O-linked glycan (1 site)"/>
</dbReference>
<dbReference type="iPTMnet" id="Q9NS93"/>
<dbReference type="PhosphoSitePlus" id="Q9NS93"/>
<dbReference type="SwissPalm" id="Q9NS93"/>
<dbReference type="BioMuta" id="TM7SF3"/>
<dbReference type="DMDM" id="21542266"/>
<dbReference type="jPOST" id="Q9NS93"/>
<dbReference type="MassIVE" id="Q9NS93"/>
<dbReference type="PaxDb" id="9606-ENSP00000342322"/>
<dbReference type="PeptideAtlas" id="Q9NS93"/>
<dbReference type="ProteomicsDB" id="82516"/>
<dbReference type="Pumba" id="Q9NS93"/>
<dbReference type="Antibodypedia" id="42376">
    <property type="antibodies" value="80 antibodies from 21 providers"/>
</dbReference>
<dbReference type="DNASU" id="51768"/>
<dbReference type="Ensembl" id="ENST00000343028.9">
    <property type="protein sequence ID" value="ENSP00000342322.4"/>
    <property type="gene ID" value="ENSG00000064115.11"/>
</dbReference>
<dbReference type="GeneID" id="51768"/>
<dbReference type="KEGG" id="hsa:51768"/>
<dbReference type="MANE-Select" id="ENST00000343028.9">
    <property type="protein sequence ID" value="ENSP00000342322.4"/>
    <property type="RefSeq nucleotide sequence ID" value="NM_016551.3"/>
    <property type="RefSeq protein sequence ID" value="NP_057635.1"/>
</dbReference>
<dbReference type="UCSC" id="uc010sjl.4">
    <property type="organism name" value="human"/>
</dbReference>
<dbReference type="AGR" id="HGNC:23049"/>
<dbReference type="CTD" id="51768"/>
<dbReference type="DisGeNET" id="51768"/>
<dbReference type="GeneCards" id="TM7SF3"/>
<dbReference type="HGNC" id="HGNC:23049">
    <property type="gene designation" value="TM7SF3"/>
</dbReference>
<dbReference type="HPA" id="ENSG00000064115">
    <property type="expression patterns" value="Tissue enhanced (kidney)"/>
</dbReference>
<dbReference type="MIM" id="605181">
    <property type="type" value="gene"/>
</dbReference>
<dbReference type="neXtProt" id="NX_Q9NS93"/>
<dbReference type="OpenTargets" id="ENSG00000064115"/>
<dbReference type="PharmGKB" id="PA134949354"/>
<dbReference type="VEuPathDB" id="HostDB:ENSG00000064115"/>
<dbReference type="eggNOG" id="ENOG502QS07">
    <property type="taxonomic scope" value="Eukaryota"/>
</dbReference>
<dbReference type="GeneTree" id="ENSGT00390000008702"/>
<dbReference type="HOGENOM" id="CLU_029739_0_0_1"/>
<dbReference type="InParanoid" id="Q9NS93"/>
<dbReference type="OMA" id="VCTWYLQ"/>
<dbReference type="OrthoDB" id="5967337at2759"/>
<dbReference type="PAN-GO" id="Q9NS93">
    <property type="GO annotations" value="2 GO annotations based on evolutionary models"/>
</dbReference>
<dbReference type="PhylomeDB" id="Q9NS93"/>
<dbReference type="TreeFam" id="TF332291"/>
<dbReference type="PathwayCommons" id="Q9NS93"/>
<dbReference type="SignaLink" id="Q9NS93"/>
<dbReference type="BioGRID-ORCS" id="51768">
    <property type="hits" value="14 hits in 1157 CRISPR screens"/>
</dbReference>
<dbReference type="ChiTaRS" id="TM7SF3">
    <property type="organism name" value="human"/>
</dbReference>
<dbReference type="GenomeRNAi" id="51768"/>
<dbReference type="Pharos" id="Q9NS93">
    <property type="development level" value="Tbio"/>
</dbReference>
<dbReference type="PRO" id="PR:Q9NS93"/>
<dbReference type="Proteomes" id="UP000005640">
    <property type="component" value="Chromosome 12"/>
</dbReference>
<dbReference type="RNAct" id="Q9NS93">
    <property type="molecule type" value="protein"/>
</dbReference>
<dbReference type="Bgee" id="ENSG00000064115">
    <property type="expression patterns" value="Expressed in body of pancreas and 194 other cell types or tissues"/>
</dbReference>
<dbReference type="ExpressionAtlas" id="Q9NS93">
    <property type="expression patterns" value="baseline and differential"/>
</dbReference>
<dbReference type="GO" id="GO:0070062">
    <property type="term" value="C:extracellular exosome"/>
    <property type="evidence" value="ECO:0007005"/>
    <property type="project" value="UniProtKB"/>
</dbReference>
<dbReference type="GO" id="GO:0005886">
    <property type="term" value="C:plasma membrane"/>
    <property type="evidence" value="ECO:0000314"/>
    <property type="project" value="UniProtKB"/>
</dbReference>
<dbReference type="GO" id="GO:0034620">
    <property type="term" value="P:cellular response to unfolded protein"/>
    <property type="evidence" value="ECO:0000315"/>
    <property type="project" value="UniProtKB"/>
</dbReference>
<dbReference type="GO" id="GO:0043069">
    <property type="term" value="P:negative regulation of programmed cell death"/>
    <property type="evidence" value="ECO:0000315"/>
    <property type="project" value="UniProtKB"/>
</dbReference>
<dbReference type="GO" id="GO:0032024">
    <property type="term" value="P:positive regulation of insulin secretion"/>
    <property type="evidence" value="ECO:0000315"/>
    <property type="project" value="UniProtKB"/>
</dbReference>
<dbReference type="InterPro" id="IPR025256">
    <property type="entry name" value="TM7S3/TM198-like_dom"/>
</dbReference>
<dbReference type="InterPro" id="IPR042502">
    <property type="entry name" value="TM7SF3"/>
</dbReference>
<dbReference type="PANTHER" id="PTHR15937">
    <property type="entry name" value="TRANSMEMBRANE 7 SUPERFAMILY MEMBER 3"/>
    <property type="match status" value="1"/>
</dbReference>
<dbReference type="PANTHER" id="PTHR15937:SF3">
    <property type="entry name" value="TRANSMEMBRANE 7 SUPERFAMILY MEMBER 3"/>
    <property type="match status" value="1"/>
</dbReference>
<dbReference type="Pfam" id="PF13886">
    <property type="entry name" value="TM7S3_TM198"/>
    <property type="match status" value="1"/>
</dbReference>